<name>MTXA_METMA</name>
<evidence type="ECO:0000250" key="1"/>
<evidence type="ECO:0000305" key="2"/>
<comment type="subunit">
    <text evidence="1">May be part of a complex composed of 3 subunits; MtxA, MtxH and MtxX.</text>
</comment>
<comment type="similarity">
    <text evidence="2">Belongs to the MtrA family.</text>
</comment>
<organism>
    <name type="scientific">Methanosarcina mazei (strain ATCC BAA-159 / DSM 3647 / Goe1 / Go1 / JCM 11833 / OCM 88)</name>
    <name type="common">Methanosarcina frisia</name>
    <dbReference type="NCBI Taxonomy" id="192952"/>
    <lineage>
        <taxon>Archaea</taxon>
        <taxon>Methanobacteriati</taxon>
        <taxon>Methanobacteriota</taxon>
        <taxon>Stenosarchaea group</taxon>
        <taxon>Methanomicrobia</taxon>
        <taxon>Methanosarcinales</taxon>
        <taxon>Methanosarcinaceae</taxon>
        <taxon>Methanosarcina</taxon>
    </lineage>
</organism>
<feature type="chain" id="PRO_0000147511" description="Putative methyltransferase Mtx subunit A">
    <location>
        <begin position="1"/>
        <end position="172"/>
    </location>
</feature>
<dbReference type="EC" id="2.1.1.-"/>
<dbReference type="EMBL" id="AE008384">
    <property type="protein sequence ID" value="AAM29951.1"/>
    <property type="molecule type" value="Genomic_DNA"/>
</dbReference>
<dbReference type="SMR" id="Q8Q082"/>
<dbReference type="KEGG" id="mma:MM_0255"/>
<dbReference type="PATRIC" id="fig|192952.21.peg.310"/>
<dbReference type="eggNOG" id="arCOG03220">
    <property type="taxonomic scope" value="Archaea"/>
</dbReference>
<dbReference type="HOGENOM" id="CLU_100863_0_0_2"/>
<dbReference type="Proteomes" id="UP000000595">
    <property type="component" value="Chromosome"/>
</dbReference>
<dbReference type="GO" id="GO:0008168">
    <property type="term" value="F:methyltransferase activity"/>
    <property type="evidence" value="ECO:0007669"/>
    <property type="project" value="UniProtKB-KW"/>
</dbReference>
<dbReference type="GO" id="GO:0032259">
    <property type="term" value="P:methylation"/>
    <property type="evidence" value="ECO:0007669"/>
    <property type="project" value="UniProtKB-KW"/>
</dbReference>
<dbReference type="InterPro" id="IPR030688">
    <property type="entry name" value="MeTrfase_MtrA/MtxA"/>
</dbReference>
<dbReference type="NCBIfam" id="NF010654">
    <property type="entry name" value="PRK14053.1"/>
    <property type="match status" value="1"/>
</dbReference>
<dbReference type="Pfam" id="PF04208">
    <property type="entry name" value="MtrA"/>
    <property type="match status" value="1"/>
</dbReference>
<dbReference type="PIRSF" id="PIRSF009452">
    <property type="entry name" value="MtrA_MtxA"/>
    <property type="match status" value="1"/>
</dbReference>
<protein>
    <recommendedName>
        <fullName>Putative methyltransferase Mtx subunit A</fullName>
        <ecNumber>2.1.1.-</ecNumber>
    </recommendedName>
</protein>
<gene>
    <name type="primary">mtxA</name>
    <name type="ordered locus">MM_0255</name>
</gene>
<accession>Q8Q082</accession>
<proteinExistence type="inferred from homology"/>
<sequence length="172" mass="18611">MVTLASHLDACPDAAIWGSSKTENLGVEKIIVNVISNSNIRYVLVCGTESRGHLAGHSLLAIHANGIDEQGRITGSQGAIPFIENISGTAVERFQQQVTVLNRIGLNDPEEIRRIVEDYRDKGEAYPEEPMLVCAPKKRQTSFAVPTSGDVIISGEFVMDSKAGIIYTAESL</sequence>
<keyword id="KW-0489">Methyltransferase</keyword>
<keyword id="KW-0808">Transferase</keyword>
<reference key="1">
    <citation type="journal article" date="2002" name="J. Mol. Microbiol. Biotechnol.">
        <title>The genome of Methanosarcina mazei: evidence for lateral gene transfer between Bacteria and Archaea.</title>
        <authorList>
            <person name="Deppenmeier U."/>
            <person name="Johann A."/>
            <person name="Hartsch T."/>
            <person name="Merkl R."/>
            <person name="Schmitz R.A."/>
            <person name="Martinez-Arias R."/>
            <person name="Henne A."/>
            <person name="Wiezer A."/>
            <person name="Baeumer S."/>
            <person name="Jacobi C."/>
            <person name="Brueggemann H."/>
            <person name="Lienard T."/>
            <person name="Christmann A."/>
            <person name="Boemecke M."/>
            <person name="Steckel S."/>
            <person name="Bhattacharyya A."/>
            <person name="Lykidis A."/>
            <person name="Overbeek R."/>
            <person name="Klenk H.-P."/>
            <person name="Gunsalus R.P."/>
            <person name="Fritz H.-J."/>
            <person name="Gottschalk G."/>
        </authorList>
    </citation>
    <scope>NUCLEOTIDE SEQUENCE [LARGE SCALE GENOMIC DNA]</scope>
    <source>
        <strain>ATCC BAA-159 / DSM 3647 / Goe1 / Go1 / JCM 11833 / OCM 88</strain>
    </source>
</reference>